<organism>
    <name type="scientific">Macaca fascicularis</name>
    <name type="common">Crab-eating macaque</name>
    <name type="synonym">Cynomolgus monkey</name>
    <dbReference type="NCBI Taxonomy" id="9541"/>
    <lineage>
        <taxon>Eukaryota</taxon>
        <taxon>Metazoa</taxon>
        <taxon>Chordata</taxon>
        <taxon>Craniata</taxon>
        <taxon>Vertebrata</taxon>
        <taxon>Euteleostomi</taxon>
        <taxon>Mammalia</taxon>
        <taxon>Eutheria</taxon>
        <taxon>Euarchontoglires</taxon>
        <taxon>Primates</taxon>
        <taxon>Haplorrhini</taxon>
        <taxon>Catarrhini</taxon>
        <taxon>Cercopithecidae</taxon>
        <taxon>Cercopithecinae</taxon>
        <taxon>Macaca</taxon>
    </lineage>
</organism>
<name>ZFP30_MACFA</name>
<protein>
    <recommendedName>
        <fullName>Zinc finger protein 30 homolog</fullName>
        <shortName>Zfp-30</shortName>
    </recommendedName>
</protein>
<feature type="chain" id="PRO_0000231520" description="Zinc finger protein 30 homolog">
    <location>
        <begin position="1"/>
        <end position="519"/>
    </location>
</feature>
<feature type="domain" description="KRAB" evidence="4">
    <location>
        <begin position="6"/>
        <end position="78"/>
    </location>
</feature>
<feature type="zinc finger region" description="C2H2-type 1" evidence="3">
    <location>
        <begin position="158"/>
        <end position="180"/>
    </location>
</feature>
<feature type="zinc finger region" description="C2H2-type 2" evidence="3">
    <location>
        <begin position="186"/>
        <end position="208"/>
    </location>
</feature>
<feature type="zinc finger region" description="C2H2-type 3" evidence="3">
    <location>
        <begin position="214"/>
        <end position="236"/>
    </location>
</feature>
<feature type="zinc finger region" description="C2H2-type 4" evidence="3">
    <location>
        <begin position="242"/>
        <end position="264"/>
    </location>
</feature>
<feature type="zinc finger region" description="C2H2-type 5" evidence="3">
    <location>
        <begin position="298"/>
        <end position="320"/>
    </location>
</feature>
<feature type="zinc finger region" description="C2H2-type 6" evidence="3">
    <location>
        <begin position="326"/>
        <end position="348"/>
    </location>
</feature>
<feature type="zinc finger region" description="C2H2-type 7" evidence="3">
    <location>
        <begin position="354"/>
        <end position="376"/>
    </location>
</feature>
<feature type="zinc finger region" description="C2H2-type 8" evidence="3">
    <location>
        <begin position="382"/>
        <end position="404"/>
    </location>
</feature>
<feature type="zinc finger region" description="C2H2-type 9" evidence="3">
    <location>
        <begin position="410"/>
        <end position="432"/>
    </location>
</feature>
<feature type="zinc finger region" description="C2H2-type 10" evidence="3">
    <location>
        <begin position="438"/>
        <end position="460"/>
    </location>
</feature>
<feature type="zinc finger region" description="C2H2-type 11" evidence="3">
    <location>
        <begin position="466"/>
        <end position="488"/>
    </location>
</feature>
<feature type="zinc finger region" description="C2H2-type 12" evidence="3">
    <location>
        <begin position="494"/>
        <end position="516"/>
    </location>
</feature>
<feature type="modified residue" description="Asymmetric dimethylarginine" evidence="1">
    <location>
        <position position="75"/>
    </location>
</feature>
<feature type="cross-link" description="Glycyl lysine isopeptide (Lys-Gly) (interchain with G-Cter in SUMO2)" evidence="2">
    <location>
        <position position="110"/>
    </location>
</feature>
<feature type="cross-link" description="Glycyl lysine isopeptide (Lys-Gly) (interchain with G-Cter in SUMO2)" evidence="2">
    <location>
        <position position="141"/>
    </location>
</feature>
<reference key="1">
    <citation type="submission" date="2001-04" db="EMBL/GenBank/DDBJ databases">
        <title>Isolation of full-length cDNA clones from macaque brain cDNA libraries.</title>
        <authorList>
            <person name="Osada N."/>
            <person name="Hida M."/>
            <person name="Kusuda J."/>
            <person name="Tanuma R."/>
            <person name="Iseki K."/>
            <person name="Hirai M."/>
            <person name="Terao K."/>
            <person name="Suzuki Y."/>
            <person name="Sugano S."/>
            <person name="Hashimoto K."/>
        </authorList>
    </citation>
    <scope>NUCLEOTIDE SEQUENCE [LARGE SCALE MRNA]</scope>
    <source>
        <tissue>Frontal cortex</tissue>
    </source>
</reference>
<comment type="function">
    <text>May be involved in transcriptional regulation.</text>
</comment>
<comment type="subcellular location">
    <subcellularLocation>
        <location evidence="5">Nucleus</location>
    </subcellularLocation>
</comment>
<comment type="similarity">
    <text evidence="5">Belongs to the krueppel C2H2-type zinc-finger protein family.</text>
</comment>
<proteinExistence type="evidence at transcript level"/>
<evidence type="ECO:0000250" key="1">
    <source>
        <dbReference type="UniProtKB" id="Q60585"/>
    </source>
</evidence>
<evidence type="ECO:0000250" key="2">
    <source>
        <dbReference type="UniProtKB" id="Q9Y2G7"/>
    </source>
</evidence>
<evidence type="ECO:0000255" key="3">
    <source>
        <dbReference type="PROSITE-ProRule" id="PRU00042"/>
    </source>
</evidence>
<evidence type="ECO:0000255" key="4">
    <source>
        <dbReference type="PROSITE-ProRule" id="PRU00119"/>
    </source>
</evidence>
<evidence type="ECO:0000305" key="5"/>
<gene>
    <name type="primary">ZFP30</name>
    <name type="ORF">QflA-14093</name>
</gene>
<accession>Q9BE27</accession>
<dbReference type="EMBL" id="AB060218">
    <property type="protein sequence ID" value="BAB41152.1"/>
    <property type="molecule type" value="mRNA"/>
</dbReference>
<dbReference type="RefSeq" id="NP_001270852.1">
    <property type="nucleotide sequence ID" value="NM_001283923.1"/>
</dbReference>
<dbReference type="SMR" id="Q9BE27"/>
<dbReference type="eggNOG" id="KOG1721">
    <property type="taxonomic scope" value="Eukaryota"/>
</dbReference>
<dbReference type="Proteomes" id="UP000233100">
    <property type="component" value="Unplaced"/>
</dbReference>
<dbReference type="GO" id="GO:0005634">
    <property type="term" value="C:nucleus"/>
    <property type="evidence" value="ECO:0007669"/>
    <property type="project" value="UniProtKB-SubCell"/>
</dbReference>
<dbReference type="GO" id="GO:0000981">
    <property type="term" value="F:DNA-binding transcription factor activity, RNA polymerase II-specific"/>
    <property type="evidence" value="ECO:0007669"/>
    <property type="project" value="TreeGrafter"/>
</dbReference>
<dbReference type="GO" id="GO:0000977">
    <property type="term" value="F:RNA polymerase II transcription regulatory region sequence-specific DNA binding"/>
    <property type="evidence" value="ECO:0007669"/>
    <property type="project" value="TreeGrafter"/>
</dbReference>
<dbReference type="GO" id="GO:0008270">
    <property type="term" value="F:zinc ion binding"/>
    <property type="evidence" value="ECO:0007669"/>
    <property type="project" value="UniProtKB-KW"/>
</dbReference>
<dbReference type="CDD" id="cd07765">
    <property type="entry name" value="KRAB_A-box"/>
    <property type="match status" value="1"/>
</dbReference>
<dbReference type="FunFam" id="3.30.160.60:FF:000020">
    <property type="entry name" value="Zinc finger protein 14 homolog"/>
    <property type="match status" value="4"/>
</dbReference>
<dbReference type="FunFam" id="3.30.160.60:FF:000473">
    <property type="entry name" value="zinc finger protein 14 homolog isoform X1"/>
    <property type="match status" value="1"/>
</dbReference>
<dbReference type="FunFam" id="3.30.160.60:FF:000561">
    <property type="entry name" value="Zinc finger protein 30 homolog"/>
    <property type="match status" value="1"/>
</dbReference>
<dbReference type="FunFam" id="3.30.160.60:FF:000434">
    <property type="entry name" value="zinc finger protein 30 homolog"/>
    <property type="match status" value="2"/>
</dbReference>
<dbReference type="FunFam" id="3.30.160.60:FF:001498">
    <property type="entry name" value="Zinc finger protein 404"/>
    <property type="match status" value="1"/>
</dbReference>
<dbReference type="FunFam" id="3.30.160.60:FF:002254">
    <property type="entry name" value="Zinc finger protein 540"/>
    <property type="match status" value="2"/>
</dbReference>
<dbReference type="FunFam" id="3.30.160.60:FF:000052">
    <property type="entry name" value="zinc finger protein 546 isoform X1"/>
    <property type="match status" value="1"/>
</dbReference>
<dbReference type="FunFam" id="3.30.160.60:FF:001270">
    <property type="entry name" value="zinc finger protein 583 isoform X1"/>
    <property type="match status" value="1"/>
</dbReference>
<dbReference type="Gene3D" id="6.10.140.140">
    <property type="match status" value="1"/>
</dbReference>
<dbReference type="Gene3D" id="3.30.160.60">
    <property type="entry name" value="Classic Zinc Finger"/>
    <property type="match status" value="13"/>
</dbReference>
<dbReference type="InterPro" id="IPR001909">
    <property type="entry name" value="KRAB"/>
</dbReference>
<dbReference type="InterPro" id="IPR036051">
    <property type="entry name" value="KRAB_dom_sf"/>
</dbReference>
<dbReference type="InterPro" id="IPR036236">
    <property type="entry name" value="Znf_C2H2_sf"/>
</dbReference>
<dbReference type="InterPro" id="IPR013087">
    <property type="entry name" value="Znf_C2H2_type"/>
</dbReference>
<dbReference type="PANTHER" id="PTHR24381">
    <property type="entry name" value="ZINC FINGER PROTEIN"/>
    <property type="match status" value="1"/>
</dbReference>
<dbReference type="PANTHER" id="PTHR24381:SF435">
    <property type="entry name" value="ZINC FINGER PROTEIN 59"/>
    <property type="match status" value="1"/>
</dbReference>
<dbReference type="Pfam" id="PF01352">
    <property type="entry name" value="KRAB"/>
    <property type="match status" value="1"/>
</dbReference>
<dbReference type="Pfam" id="PF00096">
    <property type="entry name" value="zf-C2H2"/>
    <property type="match status" value="12"/>
</dbReference>
<dbReference type="SMART" id="SM00349">
    <property type="entry name" value="KRAB"/>
    <property type="match status" value="1"/>
</dbReference>
<dbReference type="SMART" id="SM00355">
    <property type="entry name" value="ZnF_C2H2"/>
    <property type="match status" value="13"/>
</dbReference>
<dbReference type="SUPFAM" id="SSF57667">
    <property type="entry name" value="beta-beta-alpha zinc fingers"/>
    <property type="match status" value="7"/>
</dbReference>
<dbReference type="SUPFAM" id="SSF109640">
    <property type="entry name" value="KRAB domain (Kruppel-associated box)"/>
    <property type="match status" value="1"/>
</dbReference>
<dbReference type="PROSITE" id="PS50805">
    <property type="entry name" value="KRAB"/>
    <property type="match status" value="1"/>
</dbReference>
<dbReference type="PROSITE" id="PS00028">
    <property type="entry name" value="ZINC_FINGER_C2H2_1"/>
    <property type="match status" value="12"/>
</dbReference>
<dbReference type="PROSITE" id="PS50157">
    <property type="entry name" value="ZINC_FINGER_C2H2_2"/>
    <property type="match status" value="13"/>
</dbReference>
<keyword id="KW-0238">DNA-binding</keyword>
<keyword id="KW-1017">Isopeptide bond</keyword>
<keyword id="KW-0479">Metal-binding</keyword>
<keyword id="KW-0488">Methylation</keyword>
<keyword id="KW-0539">Nucleus</keyword>
<keyword id="KW-1185">Reference proteome</keyword>
<keyword id="KW-0677">Repeat</keyword>
<keyword id="KW-0804">Transcription</keyword>
<keyword id="KW-0805">Transcription regulation</keyword>
<keyword id="KW-0832">Ubl conjugation</keyword>
<keyword id="KW-0862">Zinc</keyword>
<keyword id="KW-0863">Zinc-finger</keyword>
<sequence length="519" mass="61477">MARDLVMFRDVAIDFSQEEWECLNSYQRNLYRDVILENYSNLVSLAGCSISKPDVITLLEQGKEPWMVMRDEKRRWTLDLESRYDTKKLFQEKDIYEMNLSQWKVMERIKSCGLEGQESPHEVCFRQVTKTTSGKTPTYRKLTSLPLYQKSHNREKPYECGECGKAFRVRQQLTFHQRIHTGEKPYECKECGKAFRQCAHLSRHQRIHTSDKLYECKKCGKIFTCGSDLRVHQRIHIGEKPYECKECGKGFRVRGQLNLHQRIHTGEKPYECKECGKAFRQYAHLTRHQRLNIAEKCYECKECGQAFLCSTGLRIHHKLHTGEKPYECKECGKAFRVRQQLTLHQRIHTGEKPYDCKECGKTFSRGYHLTLHQRIHTGEKPYECKECQKFFRRYSELISHQGIHIGEKPYECKECGKAFRLFSQLTQHQSIHFGEKPYKCKECEKTFRLLSQLTQHQSIHTGEKPHDCKECGKAFRLHSSLIQHQRIHSGEKPYKCKECKKAFRQHSHLTYHQRIHNVT</sequence>